<name>Y4243_ALLAM</name>
<gene>
    <name type="ordered locus">Avi_4243</name>
</gene>
<feature type="chain" id="PRO_1000164478" description="UPF0434 protein Avi_4243">
    <location>
        <begin position="1"/>
        <end position="62"/>
    </location>
</feature>
<accession>B9JUE9</accession>
<protein>
    <recommendedName>
        <fullName evidence="1">UPF0434 protein Avi_4243</fullName>
    </recommendedName>
</protein>
<dbReference type="EMBL" id="CP000633">
    <property type="protein sequence ID" value="ACM38072.1"/>
    <property type="molecule type" value="Genomic_DNA"/>
</dbReference>
<dbReference type="RefSeq" id="WP_015917483.1">
    <property type="nucleotide sequence ID" value="NC_011989.1"/>
</dbReference>
<dbReference type="SMR" id="B9JUE9"/>
<dbReference type="STRING" id="311402.Avi_4243"/>
<dbReference type="KEGG" id="avi:Avi_4243"/>
<dbReference type="eggNOG" id="COG2835">
    <property type="taxonomic scope" value="Bacteria"/>
</dbReference>
<dbReference type="HOGENOM" id="CLU_155659_2_2_5"/>
<dbReference type="Proteomes" id="UP000001596">
    <property type="component" value="Chromosome 1"/>
</dbReference>
<dbReference type="GO" id="GO:0005829">
    <property type="term" value="C:cytosol"/>
    <property type="evidence" value="ECO:0007669"/>
    <property type="project" value="TreeGrafter"/>
</dbReference>
<dbReference type="FunFam" id="2.20.25.10:FF:000002">
    <property type="entry name" value="UPF0434 protein YcaR"/>
    <property type="match status" value="1"/>
</dbReference>
<dbReference type="Gene3D" id="2.20.25.10">
    <property type="match status" value="1"/>
</dbReference>
<dbReference type="HAMAP" id="MF_01187">
    <property type="entry name" value="UPF0434"/>
    <property type="match status" value="1"/>
</dbReference>
<dbReference type="InterPro" id="IPR005651">
    <property type="entry name" value="Trm112-like"/>
</dbReference>
<dbReference type="PANTHER" id="PTHR33505:SF4">
    <property type="entry name" value="PROTEIN PREY, MITOCHONDRIAL"/>
    <property type="match status" value="1"/>
</dbReference>
<dbReference type="PANTHER" id="PTHR33505">
    <property type="entry name" value="ZGC:162634"/>
    <property type="match status" value="1"/>
</dbReference>
<dbReference type="Pfam" id="PF03966">
    <property type="entry name" value="Trm112p"/>
    <property type="match status" value="1"/>
</dbReference>
<dbReference type="SUPFAM" id="SSF158997">
    <property type="entry name" value="Trm112p-like"/>
    <property type="match status" value="1"/>
</dbReference>
<reference key="1">
    <citation type="journal article" date="2009" name="J. Bacteriol.">
        <title>Genome sequences of three Agrobacterium biovars help elucidate the evolution of multichromosome genomes in bacteria.</title>
        <authorList>
            <person name="Slater S.C."/>
            <person name="Goldman B.S."/>
            <person name="Goodner B."/>
            <person name="Setubal J.C."/>
            <person name="Farrand S.K."/>
            <person name="Nester E.W."/>
            <person name="Burr T.J."/>
            <person name="Banta L."/>
            <person name="Dickerman A.W."/>
            <person name="Paulsen I."/>
            <person name="Otten L."/>
            <person name="Suen G."/>
            <person name="Welch R."/>
            <person name="Almeida N.F."/>
            <person name="Arnold F."/>
            <person name="Burton O.T."/>
            <person name="Du Z."/>
            <person name="Ewing A."/>
            <person name="Godsy E."/>
            <person name="Heisel S."/>
            <person name="Houmiel K.L."/>
            <person name="Jhaveri J."/>
            <person name="Lu J."/>
            <person name="Miller N.M."/>
            <person name="Norton S."/>
            <person name="Chen Q."/>
            <person name="Phoolcharoen W."/>
            <person name="Ohlin V."/>
            <person name="Ondrusek D."/>
            <person name="Pride N."/>
            <person name="Stricklin S.L."/>
            <person name="Sun J."/>
            <person name="Wheeler C."/>
            <person name="Wilson L."/>
            <person name="Zhu H."/>
            <person name="Wood D.W."/>
        </authorList>
    </citation>
    <scope>NUCLEOTIDE SEQUENCE [LARGE SCALE GENOMIC DNA]</scope>
    <source>
        <strain>ATCC BAA-846 / DSM 112012 / S4</strain>
    </source>
</reference>
<organism>
    <name type="scientific">Allorhizobium ampelinum (strain ATCC BAA-846 / DSM 112012 / S4)</name>
    <name type="common">Agrobacterium vitis (strain S4)</name>
    <dbReference type="NCBI Taxonomy" id="311402"/>
    <lineage>
        <taxon>Bacteria</taxon>
        <taxon>Pseudomonadati</taxon>
        <taxon>Pseudomonadota</taxon>
        <taxon>Alphaproteobacteria</taxon>
        <taxon>Hyphomicrobiales</taxon>
        <taxon>Rhizobiaceae</taxon>
        <taxon>Rhizobium/Agrobacterium group</taxon>
        <taxon>Allorhizobium</taxon>
        <taxon>Allorhizobium ampelinum</taxon>
    </lineage>
</organism>
<comment type="similarity">
    <text evidence="1">Belongs to the UPF0434 family.</text>
</comment>
<keyword id="KW-1185">Reference proteome</keyword>
<evidence type="ECO:0000255" key="1">
    <source>
        <dbReference type="HAMAP-Rule" id="MF_01187"/>
    </source>
</evidence>
<sequence>MDQRMNGVDPKMLELLVCPLTNGRLTLNRENNELVSEKARLAYPIRDGIPIMLVSEARKIED</sequence>
<proteinExistence type="inferred from homology"/>